<name>CSCA_ECOLX</name>
<proteinExistence type="inferred from homology"/>
<protein>
    <recommendedName>
        <fullName>Sucrose-6-phosphate hydrolase</fullName>
        <shortName>Sucrase</shortName>
        <ecNumber>3.2.1.26</ecNumber>
    </recommendedName>
    <alternativeName>
        <fullName>Invertase</fullName>
    </alternativeName>
</protein>
<evidence type="ECO:0000250" key="1"/>
<evidence type="ECO:0000255" key="2">
    <source>
        <dbReference type="PROSITE-ProRule" id="PRU10067"/>
    </source>
</evidence>
<evidence type="ECO:0000305" key="3"/>
<accession>P40714</accession>
<organism>
    <name type="scientific">Escherichia coli</name>
    <dbReference type="NCBI Taxonomy" id="562"/>
    <lineage>
        <taxon>Bacteria</taxon>
        <taxon>Pseudomonadati</taxon>
        <taxon>Pseudomonadota</taxon>
        <taxon>Gammaproteobacteria</taxon>
        <taxon>Enterobacterales</taxon>
        <taxon>Enterobacteriaceae</taxon>
        <taxon>Escherichia</taxon>
    </lineage>
</organism>
<feature type="chain" id="PRO_0000169879" description="Sucrose-6-phosphate hydrolase">
    <location>
        <begin position="1"/>
        <end position="477"/>
    </location>
</feature>
<feature type="active site" evidence="2">
    <location>
        <position position="39"/>
    </location>
</feature>
<feature type="binding site" evidence="1">
    <location>
        <begin position="36"/>
        <end position="39"/>
    </location>
    <ligand>
        <name>substrate</name>
    </ligand>
</feature>
<feature type="binding site" evidence="1">
    <location>
        <position position="55"/>
    </location>
    <ligand>
        <name>substrate</name>
    </ligand>
</feature>
<feature type="binding site" evidence="1">
    <location>
        <position position="63"/>
    </location>
    <ligand>
        <name>substrate</name>
    </ligand>
</feature>
<feature type="binding site" evidence="1">
    <location>
        <begin position="98"/>
        <end position="99"/>
    </location>
    <ligand>
        <name>substrate</name>
    </ligand>
</feature>
<feature type="binding site" evidence="1">
    <location>
        <begin position="160"/>
        <end position="161"/>
    </location>
    <ligand>
        <name>substrate</name>
    </ligand>
</feature>
<feature type="binding site" evidence="1">
    <location>
        <position position="215"/>
    </location>
    <ligand>
        <name>substrate</name>
    </ligand>
</feature>
<feature type="binding site" evidence="1">
    <location>
        <position position="298"/>
    </location>
    <ligand>
        <name>substrate</name>
    </ligand>
</feature>
<comment type="function">
    <text>Enables the bacterium to metabolize sucrose as a sole carbon source.</text>
</comment>
<comment type="catalytic activity">
    <reaction evidence="2">
        <text>Hydrolysis of terminal non-reducing beta-D-fructofuranoside residues in beta-D-fructofuranosides.</text>
        <dbReference type="EC" id="3.2.1.26"/>
    </reaction>
</comment>
<comment type="pathway">
    <text>Glycan biosynthesis; sucrose metabolism.</text>
</comment>
<comment type="subcellular location">
    <subcellularLocation>
        <location>Cytoplasm</location>
    </subcellularLocation>
</comment>
<comment type="similarity">
    <text evidence="3">Belongs to the glycosyl hydrolase 32 family.</text>
</comment>
<keyword id="KW-0119">Carbohydrate metabolism</keyword>
<keyword id="KW-0963">Cytoplasm</keyword>
<keyword id="KW-0326">Glycosidase</keyword>
<keyword id="KW-0378">Hydrolase</keyword>
<gene>
    <name type="primary">cscA</name>
</gene>
<sequence>MTQSRLHAAQNALAKLHERRGNTFYPHFHLAPPAGWMNDPNGLIWFNDRYHAFYQHHPMSEHWGPMHWGHATSDDMIHWQHEPIALAPGDENDKDGCFSGSAVDDNGVLSLIYTGHVWLDGAGNDDAIREVQCLATSRDGIHFEKQGVILTPPEGIMHFRDPKVWREADTWWMVVGAKDPGNTGQILLYRGSSLREWTFDRVLAHADAGESYMWECPDFFSLGDQHYLMFSPQGMNAEGYSYRNRFQSGVIPGMWSPGRLFAQSGHFTELDNGHDFYAPQSFVAKDGRRIVIGWMDMWESPMPSKREGWAGCMTLARELSESNGKLLQRPVHEAESLRQQHQSISPRTISNKYVLQENAQAVEIQLQWALKNSDAEHYGLQLGAGMRLYIDNQSERLVLWRYYPHENLDGYRSIPLPQGDMLALRIFIDTSSVEVFINDGEAVMSSRIYPQPEERELSLYASHGVAVLQHGALWQLG</sequence>
<dbReference type="EC" id="3.2.1.26"/>
<dbReference type="EMBL" id="X81461">
    <property type="protein sequence ID" value="CAA57219.1"/>
    <property type="molecule type" value="Genomic_DNA"/>
</dbReference>
<dbReference type="PIR" id="S52162">
    <property type="entry name" value="S52162"/>
</dbReference>
<dbReference type="RefSeq" id="WP_001578726.1">
    <property type="nucleotide sequence ID" value="NZ_BKBY01000031.1"/>
</dbReference>
<dbReference type="SMR" id="P40714"/>
<dbReference type="STRING" id="585034.ECIAI1_2428"/>
<dbReference type="CAZy" id="GH32">
    <property type="family name" value="Glycoside Hydrolase Family 32"/>
</dbReference>
<dbReference type="UniPathway" id="UPA00238"/>
<dbReference type="GO" id="GO:0005737">
    <property type="term" value="C:cytoplasm"/>
    <property type="evidence" value="ECO:0007669"/>
    <property type="project" value="UniProtKB-SubCell"/>
</dbReference>
<dbReference type="GO" id="GO:0004564">
    <property type="term" value="F:beta-fructofuranosidase activity"/>
    <property type="evidence" value="ECO:0007669"/>
    <property type="project" value="UniProtKB-EC"/>
</dbReference>
<dbReference type="GO" id="GO:0005985">
    <property type="term" value="P:sucrose metabolic process"/>
    <property type="evidence" value="ECO:0007669"/>
    <property type="project" value="UniProtKB-UniPathway"/>
</dbReference>
<dbReference type="CDD" id="cd08996">
    <property type="entry name" value="GH32_FFase"/>
    <property type="match status" value="1"/>
</dbReference>
<dbReference type="Gene3D" id="2.60.120.560">
    <property type="entry name" value="Exo-inulinase, domain 1"/>
    <property type="match status" value="1"/>
</dbReference>
<dbReference type="Gene3D" id="2.115.10.20">
    <property type="entry name" value="Glycosyl hydrolase domain, family 43"/>
    <property type="match status" value="1"/>
</dbReference>
<dbReference type="InterPro" id="IPR013320">
    <property type="entry name" value="ConA-like_dom_sf"/>
</dbReference>
<dbReference type="InterPro" id="IPR051214">
    <property type="entry name" value="GH32_Enzymes"/>
</dbReference>
<dbReference type="InterPro" id="IPR001362">
    <property type="entry name" value="Glyco_hydro_32"/>
</dbReference>
<dbReference type="InterPro" id="IPR018053">
    <property type="entry name" value="Glyco_hydro_32_AS"/>
</dbReference>
<dbReference type="InterPro" id="IPR013189">
    <property type="entry name" value="Glyco_hydro_32_C"/>
</dbReference>
<dbReference type="InterPro" id="IPR013148">
    <property type="entry name" value="Glyco_hydro_32_N"/>
</dbReference>
<dbReference type="InterPro" id="IPR023296">
    <property type="entry name" value="Glyco_hydro_beta-prop_sf"/>
</dbReference>
<dbReference type="InterPro" id="IPR006232">
    <property type="entry name" value="Suc6P_hydrolase"/>
</dbReference>
<dbReference type="NCBIfam" id="TIGR01322">
    <property type="entry name" value="scrB_fam"/>
    <property type="match status" value="1"/>
</dbReference>
<dbReference type="PANTHER" id="PTHR43101">
    <property type="entry name" value="BETA-FRUCTOSIDASE"/>
    <property type="match status" value="1"/>
</dbReference>
<dbReference type="PANTHER" id="PTHR43101:SF1">
    <property type="entry name" value="BETA-FRUCTOSIDASE"/>
    <property type="match status" value="1"/>
</dbReference>
<dbReference type="Pfam" id="PF08244">
    <property type="entry name" value="Glyco_hydro_32C"/>
    <property type="match status" value="1"/>
</dbReference>
<dbReference type="Pfam" id="PF00251">
    <property type="entry name" value="Glyco_hydro_32N"/>
    <property type="match status" value="1"/>
</dbReference>
<dbReference type="SMART" id="SM00640">
    <property type="entry name" value="Glyco_32"/>
    <property type="match status" value="1"/>
</dbReference>
<dbReference type="SUPFAM" id="SSF75005">
    <property type="entry name" value="Arabinanase/levansucrase/invertase"/>
    <property type="match status" value="1"/>
</dbReference>
<dbReference type="SUPFAM" id="SSF49899">
    <property type="entry name" value="Concanavalin A-like lectins/glucanases"/>
    <property type="match status" value="1"/>
</dbReference>
<dbReference type="PROSITE" id="PS00609">
    <property type="entry name" value="GLYCOSYL_HYDROL_F32"/>
    <property type="match status" value="1"/>
</dbReference>
<reference key="1">
    <citation type="journal article" date="2002" name="J. Bacteriol.">
        <title>Adaptation of sucrose metabolism in the Escherichia coli wild-type strain EC3132.</title>
        <authorList>
            <person name="Jahreis K."/>
            <person name="Bentler L."/>
            <person name="Bockmann J."/>
            <person name="Hans S."/>
            <person name="Meyer A."/>
            <person name="Siepelmeyer J."/>
            <person name="Lengeler J.W."/>
        </authorList>
    </citation>
    <scope>NUCLEOTIDE SEQUENCE [GENOMIC DNA]</scope>
    <source>
        <strain>EC3132</strain>
    </source>
</reference>